<gene>
    <name type="primary">mppJ</name>
</gene>
<keyword id="KW-0002">3D-structure</keyword>
<keyword id="KW-0045">Antibiotic biosynthesis</keyword>
<keyword id="KW-0489">Methyltransferase</keyword>
<keyword id="KW-0949">S-adenosyl-L-methionine</keyword>
<keyword id="KW-0808">Transferase</keyword>
<dbReference type="EC" id="2.1.1.281"/>
<dbReference type="EMBL" id="AY735112">
    <property type="protein sequence ID" value="AAU34201.1"/>
    <property type="molecule type" value="Genomic_DNA"/>
</dbReference>
<dbReference type="PDB" id="4KIB">
    <property type="method" value="X-ray"/>
    <property type="resolution" value="2.00 A"/>
    <property type="chains" value="A/B=1-337"/>
</dbReference>
<dbReference type="PDB" id="4KIC">
    <property type="method" value="X-ray"/>
    <property type="resolution" value="2.43 A"/>
    <property type="chains" value="A/B=1-337"/>
</dbReference>
<dbReference type="PDB" id="4KIF">
    <property type="method" value="X-ray"/>
    <property type="resolution" value="2.50 A"/>
    <property type="chains" value="A/B=1-337"/>
</dbReference>
<dbReference type="PDB" id="4KIG">
    <property type="method" value="X-ray"/>
    <property type="resolution" value="2.40 A"/>
    <property type="chains" value="A/B=1-337"/>
</dbReference>
<dbReference type="PDB" id="4M6X">
    <property type="method" value="X-ray"/>
    <property type="resolution" value="2.30 A"/>
    <property type="chains" value="A/B=1-337"/>
</dbReference>
<dbReference type="PDB" id="4M6Y">
    <property type="method" value="X-ray"/>
    <property type="resolution" value="2.50 A"/>
    <property type="chains" value="A/B=1-337"/>
</dbReference>
<dbReference type="PDB" id="4M71">
    <property type="method" value="X-ray"/>
    <property type="resolution" value="2.21 A"/>
    <property type="chains" value="A/B=1-337"/>
</dbReference>
<dbReference type="PDB" id="4M72">
    <property type="method" value="X-ray"/>
    <property type="resolution" value="2.10 A"/>
    <property type="chains" value="A/B=1-337"/>
</dbReference>
<dbReference type="PDB" id="4M73">
    <property type="method" value="X-ray"/>
    <property type="resolution" value="2.00 A"/>
    <property type="chains" value="A/B=1-337"/>
</dbReference>
<dbReference type="PDB" id="4M74">
    <property type="method" value="X-ray"/>
    <property type="resolution" value="2.20 A"/>
    <property type="chains" value="A/B=1-337"/>
</dbReference>
<dbReference type="PDBsum" id="4KIB"/>
<dbReference type="PDBsum" id="4KIC"/>
<dbReference type="PDBsum" id="4KIF"/>
<dbReference type="PDBsum" id="4KIG"/>
<dbReference type="PDBsum" id="4M6X"/>
<dbReference type="PDBsum" id="4M6Y"/>
<dbReference type="PDBsum" id="4M71"/>
<dbReference type="PDBsum" id="4M72"/>
<dbReference type="PDBsum" id="4M73"/>
<dbReference type="PDBsum" id="4M74"/>
<dbReference type="SMR" id="Q643C8"/>
<dbReference type="KEGG" id="ag:AAU34201"/>
<dbReference type="BioCyc" id="MetaCyc:MONOMER-18033"/>
<dbReference type="BRENDA" id="2.1.1.281">
    <property type="organism ID" value="6043"/>
</dbReference>
<dbReference type="BRENDA" id="2.6.1.107">
    <property type="organism ID" value="6043"/>
</dbReference>
<dbReference type="EvolutionaryTrace" id="Q643C8"/>
<dbReference type="GO" id="GO:0008168">
    <property type="term" value="F:methyltransferase activity"/>
    <property type="evidence" value="ECO:0007669"/>
    <property type="project" value="UniProtKB-KW"/>
</dbReference>
<dbReference type="GO" id="GO:0017000">
    <property type="term" value="P:antibiotic biosynthetic process"/>
    <property type="evidence" value="ECO:0007669"/>
    <property type="project" value="UniProtKB-KW"/>
</dbReference>
<dbReference type="GO" id="GO:0032259">
    <property type="term" value="P:methylation"/>
    <property type="evidence" value="ECO:0007669"/>
    <property type="project" value="UniProtKB-KW"/>
</dbReference>
<dbReference type="CDD" id="cd02440">
    <property type="entry name" value="AdoMet_MTases"/>
    <property type="match status" value="1"/>
</dbReference>
<dbReference type="Gene3D" id="3.40.50.150">
    <property type="entry name" value="Vaccinia Virus protein VP39"/>
    <property type="match status" value="1"/>
</dbReference>
<dbReference type="Gene3D" id="1.10.10.10">
    <property type="entry name" value="Winged helix-like DNA-binding domain superfamily/Winged helix DNA-binding domain"/>
    <property type="match status" value="1"/>
</dbReference>
<dbReference type="InterPro" id="IPR041698">
    <property type="entry name" value="Methyltransf_25"/>
</dbReference>
<dbReference type="InterPro" id="IPR029063">
    <property type="entry name" value="SAM-dependent_MTases_sf"/>
</dbReference>
<dbReference type="InterPro" id="IPR036388">
    <property type="entry name" value="WH-like_DNA-bd_sf"/>
</dbReference>
<dbReference type="InterPro" id="IPR036390">
    <property type="entry name" value="WH_DNA-bd_sf"/>
</dbReference>
<dbReference type="PANTHER" id="PTHR43712:SF2">
    <property type="entry name" value="O-METHYLTRANSFERASE CICE"/>
    <property type="match status" value="1"/>
</dbReference>
<dbReference type="PANTHER" id="PTHR43712">
    <property type="entry name" value="PUTATIVE (AFU_ORTHOLOGUE AFUA_4G14580)-RELATED"/>
    <property type="match status" value="1"/>
</dbReference>
<dbReference type="Pfam" id="PF13649">
    <property type="entry name" value="Methyltransf_25"/>
    <property type="match status" value="1"/>
</dbReference>
<dbReference type="SUPFAM" id="SSF53335">
    <property type="entry name" value="S-adenosyl-L-methionine-dependent methyltransferases"/>
    <property type="match status" value="1"/>
</dbReference>
<dbReference type="SUPFAM" id="SSF46785">
    <property type="entry name" value="Winged helix' DNA-binding domain"/>
    <property type="match status" value="1"/>
</dbReference>
<organism>
    <name type="scientific">Streptomyces hygroscopicus</name>
    <dbReference type="NCBI Taxonomy" id="1912"/>
    <lineage>
        <taxon>Bacteria</taxon>
        <taxon>Bacillati</taxon>
        <taxon>Actinomycetota</taxon>
        <taxon>Actinomycetes</taxon>
        <taxon>Kitasatosporales</taxon>
        <taxon>Streptomycetaceae</taxon>
        <taxon>Streptomyces</taxon>
        <taxon>Streptomyces violaceusniger group</taxon>
    </lineage>
</organism>
<sequence>MSTEVSEAQARRAVADIFNSTLASSAIGAAWELGALDELRENGKLDVSDFAVRHDLHEPAVVGMFTALASVGIVRREGATVVVGPYFDEANHHRSLFHWLNQGSGELFRRMPQVLPNENRTGKFYQRDAGAISYACREISERYFDPAFWAAVDGLGYTPTTVADLGSGSGERLIQIARRFPGVRGLGVDIADGAIAMAEKEVAAKGFGDQISFVRGDARTIDQVSARGEFAEVDLLTCFMMGHDFWPRENCVQTLRKLRAAFPNVRRFLLGDATRTVGIPDRELPVFTLGFEFGHDMMGVYLPTLDEWDGVFEEGGWRCVKKHAIDSLSVSVVFELE</sequence>
<comment type="function">
    <text evidence="1">S-adenosyl-L-methionine-dependent methyltransferase involved in synthesis of the nonproteinogenic amino acid (2S,3S)-beta-methyl-phenylalanine, a building block of the antibiotic mannopeptimycin.</text>
</comment>
<comment type="catalytic activity">
    <reaction evidence="1">
        <text>3-phenylpyruvate + S-adenosyl-L-methionine = (3S)-2-oxo-3-phenylbutanoate + S-adenosyl-L-homocysteine + H(+)</text>
        <dbReference type="Rhea" id="RHEA:36623"/>
        <dbReference type="ChEBI" id="CHEBI:15378"/>
        <dbReference type="ChEBI" id="CHEBI:18005"/>
        <dbReference type="ChEBI" id="CHEBI:57856"/>
        <dbReference type="ChEBI" id="CHEBI:59789"/>
        <dbReference type="ChEBI" id="CHEBI:74119"/>
        <dbReference type="EC" id="2.1.1.281"/>
    </reaction>
</comment>
<comment type="biophysicochemical properties">
    <kinetics>
        <KM evidence="1">0.014 mM for S-adenosyl-L-methionine</KM>
        <KM evidence="1">2.5 mM for phenylpyruvic acid</KM>
        <text>kcat is 0.8 sec(-1) with S-adenosyl-L-methionine as substrate. kcat is 8.15 sec(-1) with phenylpyruvic acid as substrate.</text>
    </kinetics>
</comment>
<comment type="pathway">
    <text evidence="1">Antibiotic biosynthesis.</text>
</comment>
<comment type="similarity">
    <text evidence="2">Belongs to the methyltransferase superfamily.</text>
</comment>
<proteinExistence type="evidence at protein level"/>
<protein>
    <recommendedName>
        <fullName>Phenylpyruvate C(3)-methyltransferase</fullName>
        <ecNumber>2.1.1.281</ecNumber>
    </recommendedName>
    <alternativeName>
        <fullName>Mannopeptimycin biosynthesis protein J</fullName>
    </alternativeName>
</protein>
<feature type="chain" id="PRO_0000424006" description="Phenylpyruvate C(3)-methyltransferase">
    <location>
        <begin position="1"/>
        <end position="337"/>
    </location>
</feature>
<feature type="helix" evidence="3">
    <location>
        <begin position="7"/>
        <end position="33"/>
    </location>
</feature>
<feature type="helix" evidence="3">
    <location>
        <begin position="35"/>
        <end position="42"/>
    </location>
</feature>
<feature type="strand" evidence="3">
    <location>
        <begin position="43"/>
        <end position="46"/>
    </location>
</feature>
<feature type="helix" evidence="3">
    <location>
        <begin position="47"/>
        <end position="54"/>
    </location>
</feature>
<feature type="helix" evidence="3">
    <location>
        <begin position="58"/>
        <end position="69"/>
    </location>
</feature>
<feature type="turn" evidence="3">
    <location>
        <begin position="70"/>
        <end position="72"/>
    </location>
</feature>
<feature type="strand" evidence="3">
    <location>
        <begin position="73"/>
        <end position="77"/>
    </location>
</feature>
<feature type="strand" evidence="3">
    <location>
        <begin position="80"/>
        <end position="83"/>
    </location>
</feature>
<feature type="helix" evidence="3">
    <location>
        <begin position="87"/>
        <end position="92"/>
    </location>
</feature>
<feature type="helix" evidence="3">
    <location>
        <begin position="94"/>
        <end position="100"/>
    </location>
</feature>
<feature type="turn" evidence="3">
    <location>
        <begin position="101"/>
        <end position="104"/>
    </location>
</feature>
<feature type="helix" evidence="3">
    <location>
        <begin position="105"/>
        <end position="109"/>
    </location>
</feature>
<feature type="helix" evidence="3">
    <location>
        <begin position="111"/>
        <end position="114"/>
    </location>
</feature>
<feature type="helix" evidence="3">
    <location>
        <begin position="117"/>
        <end position="119"/>
    </location>
</feature>
<feature type="strand" evidence="3">
    <location>
        <begin position="121"/>
        <end position="123"/>
    </location>
</feature>
<feature type="helix" evidence="3">
    <location>
        <begin position="129"/>
        <end position="143"/>
    </location>
</feature>
<feature type="helix" evidence="3">
    <location>
        <begin position="145"/>
        <end position="153"/>
    </location>
</feature>
<feature type="strand" evidence="3">
    <location>
        <begin position="155"/>
        <end position="157"/>
    </location>
</feature>
<feature type="strand" evidence="3">
    <location>
        <begin position="160"/>
        <end position="166"/>
    </location>
</feature>
<feature type="helix" evidence="3">
    <location>
        <begin position="171"/>
        <end position="179"/>
    </location>
</feature>
<feature type="strand" evidence="3">
    <location>
        <begin position="184"/>
        <end position="190"/>
    </location>
</feature>
<feature type="helix" evidence="3">
    <location>
        <begin position="192"/>
        <end position="204"/>
    </location>
</feature>
<feature type="turn" evidence="3">
    <location>
        <begin position="208"/>
        <end position="210"/>
    </location>
</feature>
<feature type="strand" evidence="3">
    <location>
        <begin position="211"/>
        <end position="215"/>
    </location>
</feature>
<feature type="helix" evidence="3">
    <location>
        <begin position="218"/>
        <end position="223"/>
    </location>
</feature>
<feature type="helix" evidence="3">
    <location>
        <begin position="227"/>
        <end position="232"/>
    </location>
</feature>
<feature type="strand" evidence="3">
    <location>
        <begin position="235"/>
        <end position="240"/>
    </location>
</feature>
<feature type="helix" evidence="3">
    <location>
        <begin position="242"/>
        <end position="245"/>
    </location>
</feature>
<feature type="helix" evidence="3">
    <location>
        <begin position="248"/>
        <end position="261"/>
    </location>
</feature>
<feature type="strand" evidence="3">
    <location>
        <begin position="267"/>
        <end position="274"/>
    </location>
</feature>
<feature type="helix" evidence="3">
    <location>
        <begin position="281"/>
        <end position="283"/>
    </location>
</feature>
<feature type="helix" evidence="3">
    <location>
        <begin position="288"/>
        <end position="298"/>
    </location>
</feature>
<feature type="helix" evidence="3">
    <location>
        <begin position="305"/>
        <end position="309"/>
    </location>
</feature>
<feature type="helix" evidence="3">
    <location>
        <begin position="312"/>
        <end position="315"/>
    </location>
</feature>
<feature type="strand" evidence="3">
    <location>
        <begin position="318"/>
        <end position="337"/>
    </location>
</feature>
<name>MPPJ_STRHY</name>
<reference key="1">
    <citation type="journal article" date="2006" name="Antimicrob. Agents Chemother.">
        <title>Biosynthetic pathway for mannopeptimycins, lipoglycopeptide antibiotics active against drug-resistant gram-positive pathogens.</title>
        <authorList>
            <person name="Magarvey N.A."/>
            <person name="Haltli B."/>
            <person name="He M."/>
            <person name="Greenstein M."/>
            <person name="Hucul J.A."/>
        </authorList>
    </citation>
    <scope>NUCLEOTIDE SEQUENCE [GENOMIC DNA]</scope>
</reference>
<reference key="2">
    <citation type="journal article" date="2009" name="ChemBioChem">
        <title>In vitro characterization of enzymes involved in the synthesis of nonproteinogenic residue (2S,3S)-beta-methylphenylalanine in glycopeptide antibiotic mannopeptimycin.</title>
        <authorList>
            <person name="Huang Y.T."/>
            <person name="Lyu S.Y."/>
            <person name="Chuang P.H."/>
            <person name="Hsu N.S."/>
            <person name="Li Y.S."/>
            <person name="Chan H.C."/>
            <person name="Huang C.J."/>
            <person name="Liu Y.C."/>
            <person name="Wu C.J."/>
            <person name="Yang W.B."/>
            <person name="Li T.L."/>
        </authorList>
    </citation>
    <scope>FUNCTION</scope>
    <scope>CATALYTIC ACTIVITY</scope>
    <scope>BIOPHYSICOCHEMICAL PROPERTIES</scope>
    <scope>PATHWAY</scope>
    <source>
        <strain>NRRL 3085</strain>
    </source>
</reference>
<evidence type="ECO:0000269" key="1">
    <source>
    </source>
</evidence>
<evidence type="ECO:0000305" key="2"/>
<evidence type="ECO:0007829" key="3">
    <source>
        <dbReference type="PDB" id="4KIB"/>
    </source>
</evidence>
<accession>Q643C8</accession>